<protein>
    <recommendedName>
        <fullName evidence="1">Nucleoprotein</fullName>
    </recommendedName>
    <alternativeName>
        <fullName evidence="1">Nucleocapsid protein</fullName>
        <shortName evidence="1">Protein N</shortName>
    </alternativeName>
</protein>
<gene>
    <name evidence="1" type="primary">NP</name>
</gene>
<evidence type="ECO:0000255" key="1">
    <source>
        <dbReference type="HAMAP-Rule" id="MF_04070"/>
    </source>
</evidence>
<evidence type="ECO:0000256" key="2">
    <source>
        <dbReference type="SAM" id="MobiDB-lite"/>
    </source>
</evidence>
<accession>P26068</accession>
<feature type="chain" id="PRO_0000079060" description="Nucleoprotein">
    <location>
        <begin position="1"/>
        <end position="498"/>
    </location>
</feature>
<feature type="region of interest" description="Disordered" evidence="2">
    <location>
        <begin position="1"/>
        <end position="21"/>
    </location>
</feature>
<feature type="short sequence motif" description="Unconventional nuclear localization signal" evidence="1">
    <location>
        <begin position="1"/>
        <end position="18"/>
    </location>
</feature>
<feature type="short sequence motif" description="Bipartite nuclear localization signal" evidence="1">
    <location>
        <begin position="198"/>
        <end position="216"/>
    </location>
</feature>
<reference key="1">
    <citation type="journal article" date="1991" name="J. Virol.">
        <title>Evolution of influenza A virus nucleoprotein genes: implications for the origins of H1N1 human and classical swine viruses.</title>
        <authorList>
            <person name="Gorman O.T."/>
            <person name="Bean W.J."/>
            <person name="Kawaoka Y."/>
            <person name="Donatelli I."/>
            <person name="Guo Y."/>
            <person name="Webster R.G."/>
        </authorList>
    </citation>
    <scope>NUCLEOTIDE SEQUENCE [GENOMIC RNA]</scope>
</reference>
<organism>
    <name type="scientific">Influenza A virus (strain A/Equine/Jillin/1/1989 H3N8)</name>
    <dbReference type="NCBI Taxonomy" id="385585"/>
    <lineage>
        <taxon>Viruses</taxon>
        <taxon>Riboviria</taxon>
        <taxon>Orthornavirae</taxon>
        <taxon>Negarnaviricota</taxon>
        <taxon>Polyploviricotina</taxon>
        <taxon>Insthoviricetes</taxon>
        <taxon>Articulavirales</taxon>
        <taxon>Orthomyxoviridae</taxon>
        <taxon>Alphainfluenzavirus</taxon>
        <taxon>Alphainfluenzavirus influenzae</taxon>
        <taxon>Influenza A virus</taxon>
    </lineage>
</organism>
<dbReference type="EMBL" id="M63786">
    <property type="protein sequence ID" value="AAA52247.1"/>
    <property type="molecule type" value="Genomic_RNA"/>
</dbReference>
<dbReference type="SMR" id="P26068"/>
<dbReference type="Proteomes" id="UP000130281">
    <property type="component" value="Genome"/>
</dbReference>
<dbReference type="GO" id="GO:0019029">
    <property type="term" value="C:helical viral capsid"/>
    <property type="evidence" value="ECO:0007669"/>
    <property type="project" value="UniProtKB-UniRule"/>
</dbReference>
<dbReference type="GO" id="GO:0043657">
    <property type="term" value="C:host cell"/>
    <property type="evidence" value="ECO:0007669"/>
    <property type="project" value="GOC"/>
</dbReference>
<dbReference type="GO" id="GO:0042025">
    <property type="term" value="C:host cell nucleus"/>
    <property type="evidence" value="ECO:0007669"/>
    <property type="project" value="UniProtKB-SubCell"/>
</dbReference>
<dbReference type="GO" id="GO:1990904">
    <property type="term" value="C:ribonucleoprotein complex"/>
    <property type="evidence" value="ECO:0007669"/>
    <property type="project" value="UniProtKB-KW"/>
</dbReference>
<dbReference type="GO" id="GO:0019013">
    <property type="term" value="C:viral nucleocapsid"/>
    <property type="evidence" value="ECO:0007669"/>
    <property type="project" value="UniProtKB-UniRule"/>
</dbReference>
<dbReference type="GO" id="GO:0003723">
    <property type="term" value="F:RNA binding"/>
    <property type="evidence" value="ECO:0007669"/>
    <property type="project" value="UniProtKB-UniRule"/>
</dbReference>
<dbReference type="GO" id="GO:0005198">
    <property type="term" value="F:structural molecule activity"/>
    <property type="evidence" value="ECO:0007669"/>
    <property type="project" value="UniProtKB-UniRule"/>
</dbReference>
<dbReference type="GO" id="GO:0046718">
    <property type="term" value="P:symbiont entry into host cell"/>
    <property type="evidence" value="ECO:0007669"/>
    <property type="project" value="UniProtKB-KW"/>
</dbReference>
<dbReference type="GO" id="GO:0075732">
    <property type="term" value="P:viral penetration into host nucleus"/>
    <property type="evidence" value="ECO:0007669"/>
    <property type="project" value="UniProtKB-UniRule"/>
</dbReference>
<dbReference type="HAMAP" id="MF_04070">
    <property type="entry name" value="INFV_NCAP"/>
    <property type="match status" value="1"/>
</dbReference>
<dbReference type="InterPro" id="IPR002141">
    <property type="entry name" value="Flu_NP"/>
</dbReference>
<dbReference type="Pfam" id="PF00506">
    <property type="entry name" value="Flu_NP"/>
    <property type="match status" value="1"/>
</dbReference>
<dbReference type="SUPFAM" id="SSF161003">
    <property type="entry name" value="flu NP-like"/>
    <property type="match status" value="1"/>
</dbReference>
<name>NCAP_I89A7</name>
<sequence>MASQGTKRSYEQMETGGERQNATEIRASVGRMVGGIGRFYIQMCTELKLGDHEGRLIQNSITIERMVLSAFDERRNKYLEEHPSAGKDPKKTGGPIYRRRDGKWMRELILYDKEEIRRIWRQANNGEDATAGLTHLMIWHSNLNDATYQRTRALVRTGMDPRMCSLMQGSTLPRRSGAAGAAVKGVGTMVMELIRMIKRGINDRNFWRGENGRRTRIAYERMCNILKGKFQTAAQRAMMDQVRESRNPGNAEIEDLIFLARSALILRGSVAHKSCLPACVYGLAVASGYDFEREGYSLVGIDPFRLLQNSQVFSLIRPNENPAHKSQLVWMACHSAAFEDLRVSSFIRGTRMVPRGKLSTRGVQIASNENMETMDSNTLELRSKYWAIRTRSGGNTNKQRASAGQISVQPTFSVQRNLPFERATIMAAFTGNTEGRTSDMRTEIIRMMESARPEDASFQGRGVFELSDEKATNPIVPSFDMSNEGSYFFGDNAEEYDN</sequence>
<keyword id="KW-0167">Capsid protein</keyword>
<keyword id="KW-1139">Helical capsid protein</keyword>
<keyword id="KW-1048">Host nucleus</keyword>
<keyword id="KW-0945">Host-virus interaction</keyword>
<keyword id="KW-0687">Ribonucleoprotein</keyword>
<keyword id="KW-0694">RNA-binding</keyword>
<keyword id="KW-0543">Viral nucleoprotein</keyword>
<keyword id="KW-1163">Viral penetration into host nucleus</keyword>
<keyword id="KW-0946">Virion</keyword>
<keyword id="KW-1160">Virus entry into host cell</keyword>
<comment type="function">
    <text evidence="1">Encapsidates the negative strand viral RNA, protecting it from nucleases. The encapsidated genomic RNA is termed the ribonucleoprotein (RNP) and serves as template for transcription and replication. The RNP needs to be localized in the host nucleus to start an infectious cycle, but is too large to diffuse through the nuclear pore complex. NP comprises at least 2 nuclear localization signals that are responsible for the active RNP import into the nucleus through cellular importin alpha/beta pathway. Later in the infection, nclear export of RNPs are mediated through viral proteins NEP interacting with M1 which binds nucleoproteins. It is possible that nucleoprotein binds directly host exportin-1/XPO1 and plays an active role in RNPs nuclear export. M1 interaction with RNP seems to hide nucleoprotein's nuclear localization signals. Soon after a virion infects a new cell, M1 dissociates from the RNP under acidification of the virion driven by M2 protein. Dissociation of M1 from RNP unmasks nucleoprotein's nuclear localization signals, targeting the RNP to the nucleus.</text>
</comment>
<comment type="subunit">
    <text evidence="1">Homomultimerizes to form the nucleocapsid. May bind host exportin-1/XPO1. Binds to viral genomic RNA. Protein-RNA contacts are mediated by a combination of electrostatic interactions between positively charged residues and the phosphate backbone and planar interactions between aromatic side chains and bases.</text>
</comment>
<comment type="subcellular location">
    <subcellularLocation>
        <location evidence="1">Virion</location>
    </subcellularLocation>
    <subcellularLocation>
        <location evidence="1">Host nucleus</location>
    </subcellularLocation>
</comment>
<comment type="PTM">
    <text evidence="1">Late in virus-infected cells, may be cleaved from a 56-kDa protein to a 53-kDa protein by a cellular caspase. This cleavage might be a marker for the onset of apoptosis in infected cells or have a specific function in virus host interaction.</text>
</comment>
<comment type="similarity">
    <text evidence="1">Belongs to the influenza viruses nucleoprotein family.</text>
</comment>
<proteinExistence type="inferred from homology"/>
<organismHost>
    <name type="scientific">Aves</name>
    <dbReference type="NCBI Taxonomy" id="8782"/>
</organismHost>
<organismHost>
    <name type="scientific">Equus caballus</name>
    <name type="common">Horse</name>
    <dbReference type="NCBI Taxonomy" id="9796"/>
</organismHost>